<keyword id="KW-1185">Reference proteome</keyword>
<keyword id="KW-0687">Ribonucleoprotein</keyword>
<keyword id="KW-0689">Ribosomal protein</keyword>
<name>RL13_AROAE</name>
<dbReference type="EMBL" id="CR555306">
    <property type="protein sequence ID" value="CAI06624.1"/>
    <property type="molecule type" value="Genomic_DNA"/>
</dbReference>
<dbReference type="RefSeq" id="WP_011236354.1">
    <property type="nucleotide sequence ID" value="NC_006513.1"/>
</dbReference>
<dbReference type="SMR" id="Q5P7T7"/>
<dbReference type="STRING" id="76114.ebA938"/>
<dbReference type="KEGG" id="eba:ebA938"/>
<dbReference type="eggNOG" id="COG0102">
    <property type="taxonomic scope" value="Bacteria"/>
</dbReference>
<dbReference type="HOGENOM" id="CLU_082184_2_2_4"/>
<dbReference type="OrthoDB" id="9801330at2"/>
<dbReference type="Proteomes" id="UP000006552">
    <property type="component" value="Chromosome"/>
</dbReference>
<dbReference type="GO" id="GO:0022625">
    <property type="term" value="C:cytosolic large ribosomal subunit"/>
    <property type="evidence" value="ECO:0007669"/>
    <property type="project" value="TreeGrafter"/>
</dbReference>
<dbReference type="GO" id="GO:0003729">
    <property type="term" value="F:mRNA binding"/>
    <property type="evidence" value="ECO:0007669"/>
    <property type="project" value="TreeGrafter"/>
</dbReference>
<dbReference type="GO" id="GO:0003735">
    <property type="term" value="F:structural constituent of ribosome"/>
    <property type="evidence" value="ECO:0007669"/>
    <property type="project" value="InterPro"/>
</dbReference>
<dbReference type="GO" id="GO:0017148">
    <property type="term" value="P:negative regulation of translation"/>
    <property type="evidence" value="ECO:0007669"/>
    <property type="project" value="TreeGrafter"/>
</dbReference>
<dbReference type="GO" id="GO:0006412">
    <property type="term" value="P:translation"/>
    <property type="evidence" value="ECO:0007669"/>
    <property type="project" value="UniProtKB-UniRule"/>
</dbReference>
<dbReference type="CDD" id="cd00392">
    <property type="entry name" value="Ribosomal_L13"/>
    <property type="match status" value="1"/>
</dbReference>
<dbReference type="FunFam" id="3.90.1180.10:FF:000001">
    <property type="entry name" value="50S ribosomal protein L13"/>
    <property type="match status" value="1"/>
</dbReference>
<dbReference type="Gene3D" id="3.90.1180.10">
    <property type="entry name" value="Ribosomal protein L13"/>
    <property type="match status" value="1"/>
</dbReference>
<dbReference type="HAMAP" id="MF_01366">
    <property type="entry name" value="Ribosomal_uL13"/>
    <property type="match status" value="1"/>
</dbReference>
<dbReference type="InterPro" id="IPR005822">
    <property type="entry name" value="Ribosomal_uL13"/>
</dbReference>
<dbReference type="InterPro" id="IPR005823">
    <property type="entry name" value="Ribosomal_uL13_bac-type"/>
</dbReference>
<dbReference type="InterPro" id="IPR036899">
    <property type="entry name" value="Ribosomal_uL13_sf"/>
</dbReference>
<dbReference type="NCBIfam" id="TIGR01066">
    <property type="entry name" value="rplM_bact"/>
    <property type="match status" value="1"/>
</dbReference>
<dbReference type="PANTHER" id="PTHR11545:SF2">
    <property type="entry name" value="LARGE RIBOSOMAL SUBUNIT PROTEIN UL13M"/>
    <property type="match status" value="1"/>
</dbReference>
<dbReference type="PANTHER" id="PTHR11545">
    <property type="entry name" value="RIBOSOMAL PROTEIN L13"/>
    <property type="match status" value="1"/>
</dbReference>
<dbReference type="Pfam" id="PF00572">
    <property type="entry name" value="Ribosomal_L13"/>
    <property type="match status" value="1"/>
</dbReference>
<dbReference type="PIRSF" id="PIRSF002181">
    <property type="entry name" value="Ribosomal_L13"/>
    <property type="match status" value="1"/>
</dbReference>
<dbReference type="SUPFAM" id="SSF52161">
    <property type="entry name" value="Ribosomal protein L13"/>
    <property type="match status" value="1"/>
</dbReference>
<feature type="chain" id="PRO_0000261680" description="Large ribosomal subunit protein uL13">
    <location>
        <begin position="1"/>
        <end position="142"/>
    </location>
</feature>
<accession>Q5P7T7</accession>
<comment type="function">
    <text evidence="1">This protein is one of the early assembly proteins of the 50S ribosomal subunit, although it is not seen to bind rRNA by itself. It is important during the early stages of 50S assembly.</text>
</comment>
<comment type="subunit">
    <text evidence="1">Part of the 50S ribosomal subunit.</text>
</comment>
<comment type="similarity">
    <text evidence="1">Belongs to the universal ribosomal protein uL13 family.</text>
</comment>
<evidence type="ECO:0000255" key="1">
    <source>
        <dbReference type="HAMAP-Rule" id="MF_01366"/>
    </source>
</evidence>
<evidence type="ECO:0000305" key="2"/>
<protein>
    <recommendedName>
        <fullName evidence="1">Large ribosomal subunit protein uL13</fullName>
    </recommendedName>
    <alternativeName>
        <fullName evidence="2">50S ribosomal protein L13</fullName>
    </alternativeName>
</protein>
<proteinExistence type="inferred from homology"/>
<gene>
    <name evidence="1" type="primary">rplM</name>
    <name type="ordered locus">AZOSEA05020</name>
    <name type="ORF">ebA938</name>
</gene>
<organism>
    <name type="scientific">Aromatoleum aromaticum (strain DSM 19018 / LMG 30748 / EbN1)</name>
    <name type="common">Azoarcus sp. (strain EbN1)</name>
    <dbReference type="NCBI Taxonomy" id="76114"/>
    <lineage>
        <taxon>Bacteria</taxon>
        <taxon>Pseudomonadati</taxon>
        <taxon>Pseudomonadota</taxon>
        <taxon>Betaproteobacteria</taxon>
        <taxon>Rhodocyclales</taxon>
        <taxon>Rhodocyclaceae</taxon>
        <taxon>Aromatoleum</taxon>
    </lineage>
</organism>
<sequence>MKTFSAKPHEVKRDWFVVDASDKVLGRLAAEVARRLRGKHKAIYTPHVDTGDFIVVVNVEKLRVTGNKALDKKYYRHTGYPGGIYETNFTKLQQRFPERVLEKAVKGMLPKGPLGYAMLKKLKCYAGGEHPHSAQQPQVLEI</sequence>
<reference key="1">
    <citation type="journal article" date="2005" name="Arch. Microbiol.">
        <title>The genome sequence of an anaerobic aromatic-degrading denitrifying bacterium, strain EbN1.</title>
        <authorList>
            <person name="Rabus R."/>
            <person name="Kube M."/>
            <person name="Heider J."/>
            <person name="Beck A."/>
            <person name="Heitmann K."/>
            <person name="Widdel F."/>
            <person name="Reinhardt R."/>
        </authorList>
    </citation>
    <scope>NUCLEOTIDE SEQUENCE [LARGE SCALE GENOMIC DNA]</scope>
    <source>
        <strain>DSM 19018 / LMG 30748 / EbN1</strain>
    </source>
</reference>